<evidence type="ECO:0000250" key="1"/>
<evidence type="ECO:0000255" key="2">
    <source>
        <dbReference type="PROSITE-ProRule" id="PRU00169"/>
    </source>
</evidence>
<evidence type="ECO:0000255" key="3">
    <source>
        <dbReference type="PROSITE-ProRule" id="PRU00411"/>
    </source>
</evidence>
<evidence type="ECO:0000305" key="4"/>
<feature type="chain" id="PRO_0000081100" description="Transcriptional regulatory protein FixJ">
    <location>
        <begin position="1"/>
        <end position="211"/>
    </location>
</feature>
<feature type="domain" description="Response regulatory" evidence="2">
    <location>
        <begin position="6"/>
        <end position="120"/>
    </location>
</feature>
<feature type="domain" description="HTH luxR-type" evidence="3">
    <location>
        <begin position="136"/>
        <end position="201"/>
    </location>
</feature>
<feature type="DNA-binding region" description="H-T-H motif" evidence="3">
    <location>
        <begin position="160"/>
        <end position="179"/>
    </location>
</feature>
<feature type="binding site" evidence="1">
    <location>
        <position position="11"/>
    </location>
    <ligand>
        <name>Mg(2+)</name>
        <dbReference type="ChEBI" id="CHEBI:18420"/>
    </ligand>
</feature>
<feature type="binding site" evidence="1">
    <location>
        <position position="12"/>
    </location>
    <ligand>
        <name>Mg(2+)</name>
        <dbReference type="ChEBI" id="CHEBI:18420"/>
    </ligand>
</feature>
<feature type="binding site" evidence="1">
    <location>
        <position position="55"/>
    </location>
    <ligand>
        <name>Mg(2+)</name>
        <dbReference type="ChEBI" id="CHEBI:18420"/>
    </ligand>
</feature>
<feature type="binding site" evidence="1">
    <location>
        <position position="57"/>
    </location>
    <ligand>
        <name>Mg(2+)</name>
        <dbReference type="ChEBI" id="CHEBI:18420"/>
    </ligand>
</feature>
<feature type="modified residue" description="4-aspartylphosphate" evidence="2">
    <location>
        <position position="55"/>
    </location>
</feature>
<name>FIXJ_AZOC5</name>
<dbReference type="EMBL" id="X56658">
    <property type="protein sequence ID" value="CAA39980.1"/>
    <property type="molecule type" value="Genomic_DNA"/>
</dbReference>
<dbReference type="EMBL" id="AP009384">
    <property type="protein sequence ID" value="BAF90653.1"/>
    <property type="molecule type" value="Genomic_DNA"/>
</dbReference>
<dbReference type="PIR" id="S15167">
    <property type="entry name" value="S15167"/>
</dbReference>
<dbReference type="RefSeq" id="WP_012173174.1">
    <property type="nucleotide sequence ID" value="NC_009937.1"/>
</dbReference>
<dbReference type="SMR" id="P26487"/>
<dbReference type="STRING" id="438753.AZC_4655"/>
<dbReference type="KEGG" id="azc:AZC_4655"/>
<dbReference type="eggNOG" id="COG4566">
    <property type="taxonomic scope" value="Bacteria"/>
</dbReference>
<dbReference type="HOGENOM" id="CLU_000445_90_4_5"/>
<dbReference type="Proteomes" id="UP000000270">
    <property type="component" value="Chromosome"/>
</dbReference>
<dbReference type="GO" id="GO:0005737">
    <property type="term" value="C:cytoplasm"/>
    <property type="evidence" value="ECO:0007669"/>
    <property type="project" value="UniProtKB-SubCell"/>
</dbReference>
<dbReference type="GO" id="GO:0003677">
    <property type="term" value="F:DNA binding"/>
    <property type="evidence" value="ECO:0007669"/>
    <property type="project" value="UniProtKB-KW"/>
</dbReference>
<dbReference type="GO" id="GO:0046872">
    <property type="term" value="F:metal ion binding"/>
    <property type="evidence" value="ECO:0007669"/>
    <property type="project" value="UniProtKB-KW"/>
</dbReference>
<dbReference type="GO" id="GO:0009399">
    <property type="term" value="P:nitrogen fixation"/>
    <property type="evidence" value="ECO:0007669"/>
    <property type="project" value="UniProtKB-KW"/>
</dbReference>
<dbReference type="GO" id="GO:0000160">
    <property type="term" value="P:phosphorelay signal transduction system"/>
    <property type="evidence" value="ECO:0007669"/>
    <property type="project" value="UniProtKB-KW"/>
</dbReference>
<dbReference type="GO" id="GO:0006355">
    <property type="term" value="P:regulation of DNA-templated transcription"/>
    <property type="evidence" value="ECO:0007669"/>
    <property type="project" value="InterPro"/>
</dbReference>
<dbReference type="CDD" id="cd06170">
    <property type="entry name" value="LuxR_C_like"/>
    <property type="match status" value="1"/>
</dbReference>
<dbReference type="CDD" id="cd17537">
    <property type="entry name" value="REC_FixJ"/>
    <property type="match status" value="1"/>
</dbReference>
<dbReference type="FunFam" id="3.40.50.2300:FF:000018">
    <property type="entry name" value="DNA-binding transcriptional regulator NtrC"/>
    <property type="match status" value="1"/>
</dbReference>
<dbReference type="Gene3D" id="3.40.50.2300">
    <property type="match status" value="1"/>
</dbReference>
<dbReference type="Gene3D" id="1.10.10.10">
    <property type="entry name" value="Winged helix-like DNA-binding domain superfamily/Winged helix DNA-binding domain"/>
    <property type="match status" value="1"/>
</dbReference>
<dbReference type="InterPro" id="IPR011006">
    <property type="entry name" value="CheY-like_superfamily"/>
</dbReference>
<dbReference type="InterPro" id="IPR001789">
    <property type="entry name" value="Sig_transdc_resp-reg_receiver"/>
</dbReference>
<dbReference type="InterPro" id="IPR000792">
    <property type="entry name" value="Tscrpt_reg_LuxR_C"/>
</dbReference>
<dbReference type="InterPro" id="IPR036388">
    <property type="entry name" value="WH-like_DNA-bd_sf"/>
</dbReference>
<dbReference type="NCBIfam" id="NF006900">
    <property type="entry name" value="PRK09390.1"/>
    <property type="match status" value="1"/>
</dbReference>
<dbReference type="PANTHER" id="PTHR44688">
    <property type="entry name" value="DNA-BINDING TRANSCRIPTIONAL ACTIVATOR DEVR_DOSR"/>
    <property type="match status" value="1"/>
</dbReference>
<dbReference type="PANTHER" id="PTHR44688:SF16">
    <property type="entry name" value="DNA-BINDING TRANSCRIPTIONAL ACTIVATOR DEVR_DOSR"/>
    <property type="match status" value="1"/>
</dbReference>
<dbReference type="Pfam" id="PF00196">
    <property type="entry name" value="GerE"/>
    <property type="match status" value="1"/>
</dbReference>
<dbReference type="Pfam" id="PF00072">
    <property type="entry name" value="Response_reg"/>
    <property type="match status" value="1"/>
</dbReference>
<dbReference type="PRINTS" id="PR00038">
    <property type="entry name" value="HTHLUXR"/>
</dbReference>
<dbReference type="SMART" id="SM00421">
    <property type="entry name" value="HTH_LUXR"/>
    <property type="match status" value="1"/>
</dbReference>
<dbReference type="SMART" id="SM00448">
    <property type="entry name" value="REC"/>
    <property type="match status" value="1"/>
</dbReference>
<dbReference type="SUPFAM" id="SSF52172">
    <property type="entry name" value="CheY-like"/>
    <property type="match status" value="1"/>
</dbReference>
<dbReference type="PROSITE" id="PS00622">
    <property type="entry name" value="HTH_LUXR_1"/>
    <property type="match status" value="1"/>
</dbReference>
<dbReference type="PROSITE" id="PS50043">
    <property type="entry name" value="HTH_LUXR_2"/>
    <property type="match status" value="1"/>
</dbReference>
<dbReference type="PROSITE" id="PS50110">
    <property type="entry name" value="RESPONSE_REGULATORY"/>
    <property type="match status" value="1"/>
</dbReference>
<sequence length="211" mass="22283">MPESLPVHVIDDDDAVRESLAFLLESSGLAVTQHTSAAAFLDAGVPLDRGCIVTDVRMPGISGLELLKELNARGAHMAVIVMTGHGDVPLAVEAMKLGAADFLEKPFDDAAIIAAVRASLGRSAEQGRQEDARSEVGKRIAGLSQRERQVLECLVNGLANKTIAYDLGISPRTVEVYRANVMTKMKAASLPELVRMALLAGVAPADDATPT</sequence>
<gene>
    <name type="primary">fixJ</name>
    <name type="ordered locus">AZC_4655</name>
</gene>
<proteinExistence type="inferred from homology"/>
<protein>
    <recommendedName>
        <fullName>Transcriptional regulatory protein FixJ</fullName>
    </recommendedName>
</protein>
<reference key="1">
    <citation type="journal article" date="1991" name="Mol. Microbiol.">
        <title>Involvement of fixLJ in the regulation of nitrogen fixation in Azorhizobium caulinodans.</title>
        <authorList>
            <person name="Kaminski P.A."/>
            <person name="Elmerich C."/>
        </authorList>
    </citation>
    <scope>NUCLEOTIDE SEQUENCE [GENOMIC DNA]</scope>
</reference>
<reference key="2">
    <citation type="submission" date="2007-04" db="EMBL/GenBank/DDBJ databases">
        <title>Complete genome sequence of the nitrogen-fixing bacterium Azorhizobium caulinodans ORS571.</title>
        <authorList>
            <person name="Lee K.B."/>
            <person name="Backer P.D."/>
            <person name="Aono T."/>
            <person name="Liu C.T."/>
            <person name="Suzuki S."/>
            <person name="Suzuki T."/>
            <person name="Kaneko T."/>
            <person name="Yamada M."/>
            <person name="Tabata S."/>
            <person name="Kupfer D.M."/>
            <person name="Najar F.Z."/>
            <person name="Wiley G.B."/>
            <person name="Roe B."/>
            <person name="Binnewies T."/>
            <person name="Ussery D."/>
            <person name="Vereecke D."/>
            <person name="Gevers D."/>
            <person name="Holsters M."/>
            <person name="Oyaizu H."/>
        </authorList>
    </citation>
    <scope>NUCLEOTIDE SEQUENCE [LARGE SCALE GENOMIC DNA]</scope>
    <source>
        <strain>ATCC 43989 / DSM 5975 / JCM 20966 / LMG 6465 / NBRC 14845 / NCIMB 13405 / ORS 571</strain>
    </source>
</reference>
<comment type="function">
    <text>FixJ, when activated by FixL, induces the expression of both nifA, required for activation of classical nif and fix genes, and fixK, required for fixN activation.</text>
</comment>
<comment type="cofactor">
    <cofactor evidence="1">
        <name>Mg(2+)</name>
        <dbReference type="ChEBI" id="CHEBI:18420"/>
    </cofactor>
    <text evidence="1">Binds 1 Mg(2+) ion per subunit.</text>
</comment>
<comment type="subcellular location">
    <subcellularLocation>
        <location evidence="4">Cytoplasm</location>
    </subcellularLocation>
</comment>
<comment type="PTM">
    <text evidence="4">Phosphorylated by FixL.</text>
</comment>
<organism>
    <name type="scientific">Azorhizobium caulinodans (strain ATCC 43989 / DSM 5975 / JCM 20966 / LMG 6465 / NBRC 14845 / NCIMB 13405 / ORS 571)</name>
    <dbReference type="NCBI Taxonomy" id="438753"/>
    <lineage>
        <taxon>Bacteria</taxon>
        <taxon>Pseudomonadati</taxon>
        <taxon>Pseudomonadota</taxon>
        <taxon>Alphaproteobacteria</taxon>
        <taxon>Hyphomicrobiales</taxon>
        <taxon>Xanthobacteraceae</taxon>
        <taxon>Azorhizobium</taxon>
    </lineage>
</organism>
<accession>P26487</accession>
<accession>A8I019</accession>
<keyword id="KW-0010">Activator</keyword>
<keyword id="KW-0963">Cytoplasm</keyword>
<keyword id="KW-0238">DNA-binding</keyword>
<keyword id="KW-0460">Magnesium</keyword>
<keyword id="KW-0479">Metal-binding</keyword>
<keyword id="KW-0535">Nitrogen fixation</keyword>
<keyword id="KW-0597">Phosphoprotein</keyword>
<keyword id="KW-1185">Reference proteome</keyword>
<keyword id="KW-0804">Transcription</keyword>
<keyword id="KW-0805">Transcription regulation</keyword>
<keyword id="KW-0902">Two-component regulatory system</keyword>